<name>CEBPE_RAT</name>
<protein>
    <recommendedName>
        <fullName>CCAAT/enhancer-binding protein epsilon</fullName>
        <shortName>C/EBP epsilon</shortName>
    </recommendedName>
    <alternativeName>
        <fullName evidence="6">C/EBP-related protein 1</fullName>
    </alternativeName>
</protein>
<accession>P56261</accession>
<proteinExistence type="evidence at protein level"/>
<feature type="chain" id="PRO_0000076626" description="CCAAT/enhancer-binding protein epsilon">
    <location>
        <begin position="1"/>
        <end position="281"/>
    </location>
</feature>
<feature type="domain" description="bZIP" evidence="3">
    <location>
        <begin position="204"/>
        <end position="267"/>
    </location>
</feature>
<feature type="region of interest" description="Disordered" evidence="4">
    <location>
        <begin position="1"/>
        <end position="30"/>
    </location>
</feature>
<feature type="region of interest" description="Basic motif" evidence="3">
    <location>
        <begin position="208"/>
        <end position="245"/>
    </location>
</feature>
<feature type="region of interest" description="Leucine-zipper" evidence="3">
    <location>
        <begin position="246"/>
        <end position="267"/>
    </location>
</feature>
<feature type="modified residue" description="Phosphoserine" evidence="2">
    <location>
        <position position="181"/>
    </location>
</feature>
<feature type="cross-link" description="Glycyl lysine isopeptide (Lys-Gly) (interchain with G-Cter in SUMO2)" evidence="1">
    <location>
        <position position="121"/>
    </location>
</feature>
<reference key="1">
    <citation type="journal article" date="1998" name="J. Biol. Chem.">
        <title>C/EBPepsilon is a myeloid-specific activator of cytokine, chemokine, and macrophage-colony-stimulating factor receptor genes.</title>
        <authorList>
            <person name="Williams S.C."/>
            <person name="Du Y."/>
            <person name="Schwartz R.C."/>
            <person name="Weiler S.R."/>
            <person name="Ortiz M."/>
            <person name="Keller J.R."/>
            <person name="Johnson P.F."/>
        </authorList>
    </citation>
    <scope>NUCLEOTIDE SEQUENCE [GENOMIC DNA]</scope>
</reference>
<reference key="2">
    <citation type="journal article" date="1991" name="Genes Dev.">
        <title>A family of C/EBP-related proteins capable of forming covalently linked leucine zipper dimers in vitro.</title>
        <authorList>
            <person name="Williams S.C."/>
            <person name="Cantwell C.A."/>
            <person name="Johnson P.F."/>
        </authorList>
    </citation>
    <scope>NUCLEOTIDE SEQUENCE [GENOMIC DNA] OF 31-281</scope>
    <scope>SUBUNIT</scope>
</reference>
<keyword id="KW-0010">Activator</keyword>
<keyword id="KW-0238">DNA-binding</keyword>
<keyword id="KW-1017">Isopeptide bond</keyword>
<keyword id="KW-0539">Nucleus</keyword>
<keyword id="KW-0597">Phosphoprotein</keyword>
<keyword id="KW-1185">Reference proteome</keyword>
<keyword id="KW-0804">Transcription</keyword>
<keyword id="KW-0805">Transcription regulation</keyword>
<keyword id="KW-0832">Ubl conjugation</keyword>
<sequence length="281" mass="30590">MSHGTYYECEPRGGQQPLEFSGGRAGPGELGDMCEHEASIDLSAYIESGEEQLLSDLFAMKPTPEARSLKGPGTPSFPHYLPADPRPFAYPSHTFGPDRKALGPGIYSNPGSYDPRAVAVKEEPRGPEGNRGTGRGSYNPLQYQVAHCGQTAVHLPPTLAAPGQPLRVLKAPVAAAAPPCSPLLKAPSPAGPSHKGKKAVNKDSLEYRLRRERNNIAVRKSRDKAKRRIMETQQKVLEYMAENERLRSRVDQLTQELDTLRNLFRQIPEAASLIKGVGGCS</sequence>
<comment type="function">
    <text evidence="1">Transcriptional activator. C/EBP are DNA-binding proteins that recognize two different motifs: the CCAAT homology common to many promoters and the enhanced core homology common to many enhancers. Required for the promyelocyte-myelocyte transition in myeloid differentiation.</text>
</comment>
<comment type="subunit">
    <text evidence="1 5">Binds DNA as a homodimer and as a heterodimer. Can form stable heterodimers with CEBPA, CEBPB and CEBPD (PubMed:1884998). Interacts with GATA1 and SPI1 (By similarity). Interacts with SMARCD2 (By similarity).</text>
</comment>
<comment type="subcellular location">
    <subcellularLocation>
        <location evidence="1">Nucleus</location>
    </subcellularLocation>
</comment>
<comment type="similarity">
    <text evidence="7">Belongs to the bZIP family. C/EBP subfamily.</text>
</comment>
<evidence type="ECO:0000250" key="1">
    <source>
        <dbReference type="UniProtKB" id="Q15744"/>
    </source>
</evidence>
<evidence type="ECO:0000250" key="2">
    <source>
        <dbReference type="UniProtKB" id="Q6PZD9"/>
    </source>
</evidence>
<evidence type="ECO:0000255" key="3">
    <source>
        <dbReference type="PROSITE-ProRule" id="PRU00978"/>
    </source>
</evidence>
<evidence type="ECO:0000256" key="4">
    <source>
        <dbReference type="SAM" id="MobiDB-lite"/>
    </source>
</evidence>
<evidence type="ECO:0000269" key="5">
    <source>
    </source>
</evidence>
<evidence type="ECO:0000303" key="6">
    <source>
    </source>
</evidence>
<evidence type="ECO:0000305" key="7"/>
<gene>
    <name type="primary">Cebpe</name>
    <name evidence="6" type="synonym">Crp1</name>
</gene>
<organism>
    <name type="scientific">Rattus norvegicus</name>
    <name type="common">Rat</name>
    <dbReference type="NCBI Taxonomy" id="10116"/>
    <lineage>
        <taxon>Eukaryota</taxon>
        <taxon>Metazoa</taxon>
        <taxon>Chordata</taxon>
        <taxon>Craniata</taxon>
        <taxon>Vertebrata</taxon>
        <taxon>Euteleostomi</taxon>
        <taxon>Mammalia</taxon>
        <taxon>Eutheria</taxon>
        <taxon>Euarchontoglires</taxon>
        <taxon>Glires</taxon>
        <taxon>Rodentia</taxon>
        <taxon>Myomorpha</taxon>
        <taxon>Muroidea</taxon>
        <taxon>Muridae</taxon>
        <taxon>Murinae</taxon>
        <taxon>Rattus</taxon>
    </lineage>
</organism>
<dbReference type="EMBL" id="AF034716">
    <property type="protein sequence ID" value="AAC24455.1"/>
    <property type="molecule type" value="Genomic_DNA"/>
</dbReference>
<dbReference type="PIR" id="A37280">
    <property type="entry name" value="A37280"/>
</dbReference>
<dbReference type="RefSeq" id="NP_058791.1">
    <property type="nucleotide sequence ID" value="NM_017095.2"/>
</dbReference>
<dbReference type="SMR" id="P56261"/>
<dbReference type="FunCoup" id="P56261">
    <property type="interactions" value="35"/>
</dbReference>
<dbReference type="STRING" id="10116.ENSRNOP00000019154"/>
<dbReference type="PhosphoSitePlus" id="P56261"/>
<dbReference type="PaxDb" id="10116-ENSRNOP00000019154"/>
<dbReference type="Ensembl" id="ENSRNOT00000019155.4">
    <property type="protein sequence ID" value="ENSRNOP00000019154.1"/>
    <property type="gene ID" value="ENSRNOG00000014282.4"/>
</dbReference>
<dbReference type="GeneID" id="25410"/>
<dbReference type="KEGG" id="rno:25410"/>
<dbReference type="UCSC" id="RGD:2329">
    <property type="organism name" value="rat"/>
</dbReference>
<dbReference type="AGR" id="RGD:2329"/>
<dbReference type="CTD" id="1053"/>
<dbReference type="RGD" id="2329">
    <property type="gene designation" value="Cebpe"/>
</dbReference>
<dbReference type="eggNOG" id="KOG3119">
    <property type="taxonomic scope" value="Eukaryota"/>
</dbReference>
<dbReference type="GeneTree" id="ENSGT00940000161681"/>
<dbReference type="HOGENOM" id="CLU_043327_0_0_1"/>
<dbReference type="InParanoid" id="P56261"/>
<dbReference type="OMA" id="CDHEASI"/>
<dbReference type="OrthoDB" id="10032067at2759"/>
<dbReference type="PhylomeDB" id="P56261"/>
<dbReference type="TreeFam" id="TF105008"/>
<dbReference type="PRO" id="PR:P56261"/>
<dbReference type="Proteomes" id="UP000002494">
    <property type="component" value="Chromosome 15"/>
</dbReference>
<dbReference type="Bgee" id="ENSRNOG00000014282">
    <property type="expression patterns" value="Expressed in thymus and 7 other cell types or tissues"/>
</dbReference>
<dbReference type="GO" id="GO:0005654">
    <property type="term" value="C:nucleoplasm"/>
    <property type="evidence" value="ECO:0007669"/>
    <property type="project" value="Ensembl"/>
</dbReference>
<dbReference type="GO" id="GO:0005634">
    <property type="term" value="C:nucleus"/>
    <property type="evidence" value="ECO:0000266"/>
    <property type="project" value="RGD"/>
</dbReference>
<dbReference type="GO" id="GO:0005886">
    <property type="term" value="C:plasma membrane"/>
    <property type="evidence" value="ECO:0007669"/>
    <property type="project" value="Ensembl"/>
</dbReference>
<dbReference type="GO" id="GO:0090575">
    <property type="term" value="C:RNA polymerase II transcription regulator complex"/>
    <property type="evidence" value="ECO:0000266"/>
    <property type="project" value="RGD"/>
</dbReference>
<dbReference type="GO" id="GO:0003677">
    <property type="term" value="F:DNA binding"/>
    <property type="evidence" value="ECO:0000314"/>
    <property type="project" value="RGD"/>
</dbReference>
<dbReference type="GO" id="GO:0001228">
    <property type="term" value="F:DNA-binding transcription activator activity, RNA polymerase II-specific"/>
    <property type="evidence" value="ECO:0000266"/>
    <property type="project" value="RGD"/>
</dbReference>
<dbReference type="GO" id="GO:0000981">
    <property type="term" value="F:DNA-binding transcription factor activity, RNA polymerase II-specific"/>
    <property type="evidence" value="ECO:0000318"/>
    <property type="project" value="GO_Central"/>
</dbReference>
<dbReference type="GO" id="GO:0042802">
    <property type="term" value="F:identical protein binding"/>
    <property type="evidence" value="ECO:0000353"/>
    <property type="project" value="RGD"/>
</dbReference>
<dbReference type="GO" id="GO:0044877">
    <property type="term" value="F:protein-containing complex binding"/>
    <property type="evidence" value="ECO:0000314"/>
    <property type="project" value="RGD"/>
</dbReference>
<dbReference type="GO" id="GO:0000978">
    <property type="term" value="F:RNA polymerase II cis-regulatory region sequence-specific DNA binding"/>
    <property type="evidence" value="ECO:0000266"/>
    <property type="project" value="RGD"/>
</dbReference>
<dbReference type="GO" id="GO:1990837">
    <property type="term" value="F:sequence-specific double-stranded DNA binding"/>
    <property type="evidence" value="ECO:0000266"/>
    <property type="project" value="RGD"/>
</dbReference>
<dbReference type="GO" id="GO:0071222">
    <property type="term" value="P:cellular response to lipopolysaccharide"/>
    <property type="evidence" value="ECO:0000270"/>
    <property type="project" value="RGD"/>
</dbReference>
<dbReference type="GO" id="GO:0006351">
    <property type="term" value="P:DNA-templated transcription"/>
    <property type="evidence" value="ECO:0007669"/>
    <property type="project" value="InterPro"/>
</dbReference>
<dbReference type="GO" id="GO:0030851">
    <property type="term" value="P:granulocyte differentiation"/>
    <property type="evidence" value="ECO:0000266"/>
    <property type="project" value="RGD"/>
</dbReference>
<dbReference type="GO" id="GO:0030225">
    <property type="term" value="P:macrophage differentiation"/>
    <property type="evidence" value="ECO:0000266"/>
    <property type="project" value="RGD"/>
</dbReference>
<dbReference type="GO" id="GO:0030099">
    <property type="term" value="P:myeloid cell differentiation"/>
    <property type="evidence" value="ECO:0000270"/>
    <property type="project" value="RGD"/>
</dbReference>
<dbReference type="GO" id="GO:0006909">
    <property type="term" value="P:phagocytosis"/>
    <property type="evidence" value="ECO:0000266"/>
    <property type="project" value="RGD"/>
</dbReference>
<dbReference type="GO" id="GO:0010628">
    <property type="term" value="P:positive regulation of gene expression"/>
    <property type="evidence" value="ECO:0000266"/>
    <property type="project" value="RGD"/>
</dbReference>
<dbReference type="GO" id="GO:0045944">
    <property type="term" value="P:positive regulation of transcription by RNA polymerase II"/>
    <property type="evidence" value="ECO:0000266"/>
    <property type="project" value="RGD"/>
</dbReference>
<dbReference type="GO" id="GO:0006357">
    <property type="term" value="P:regulation of transcription by RNA polymerase II"/>
    <property type="evidence" value="ECO:0000318"/>
    <property type="project" value="GO_Central"/>
</dbReference>
<dbReference type="CDD" id="cd14715">
    <property type="entry name" value="bZIP_CEBPE"/>
    <property type="match status" value="1"/>
</dbReference>
<dbReference type="FunFam" id="1.20.5.170:FF:000028">
    <property type="entry name" value="CCAAT/enhancer-binding protein beta"/>
    <property type="match status" value="1"/>
</dbReference>
<dbReference type="Gene3D" id="1.20.5.170">
    <property type="match status" value="1"/>
</dbReference>
<dbReference type="InterPro" id="IPR004827">
    <property type="entry name" value="bZIP"/>
</dbReference>
<dbReference type="InterPro" id="IPR046347">
    <property type="entry name" value="bZIP_sf"/>
</dbReference>
<dbReference type="InterPro" id="IPR031106">
    <property type="entry name" value="C/EBP"/>
</dbReference>
<dbReference type="InterPro" id="IPR016468">
    <property type="entry name" value="C/EBP_chordates"/>
</dbReference>
<dbReference type="PANTHER" id="PTHR23334">
    <property type="entry name" value="CCAAT/ENHANCER BINDING PROTEIN"/>
    <property type="match status" value="1"/>
</dbReference>
<dbReference type="PANTHER" id="PTHR23334:SF27">
    <property type="entry name" value="CCAAT_ENHANCER-BINDING PROTEIN EPSILON"/>
    <property type="match status" value="1"/>
</dbReference>
<dbReference type="Pfam" id="PF07716">
    <property type="entry name" value="bZIP_2"/>
    <property type="match status" value="1"/>
</dbReference>
<dbReference type="PIRSF" id="PIRSF005879">
    <property type="entry name" value="CCAAT/enhancer-binding"/>
    <property type="match status" value="1"/>
</dbReference>
<dbReference type="SMART" id="SM00338">
    <property type="entry name" value="BRLZ"/>
    <property type="match status" value="1"/>
</dbReference>
<dbReference type="SUPFAM" id="SSF57959">
    <property type="entry name" value="Leucine zipper domain"/>
    <property type="match status" value="1"/>
</dbReference>
<dbReference type="PROSITE" id="PS50217">
    <property type="entry name" value="BZIP"/>
    <property type="match status" value="1"/>
</dbReference>